<sequence>MKSLEEKTIAKEQIFSGKVIDLYVEDVELPNGKASKREIVKHPGAVAVLAVTDEGKIIMVKQFRKPLERTIVEIPAGKLEKGEEPEYTALRELEEETGYTAKKLTKITAFYTSPGFADEIVHVFLAEELSVLEEKRELDEDEFVEVMEVTLEDALKLVESREVYDAKTAYAIQYLQLKEALQAQK</sequence>
<reference key="1">
    <citation type="journal article" date="1996" name="Microbiology">
        <title>Systematic sequencing of the 283 kb 210 degrees-232 degrees region of the Bacillus subtilis genome containing the skin element and many sporulation genes.</title>
        <authorList>
            <person name="Mizuno M."/>
            <person name="Masuda S."/>
            <person name="Takemaru K."/>
            <person name="Hosono S."/>
            <person name="Sato T."/>
            <person name="Takeuchi M."/>
            <person name="Kobayashi Y."/>
        </authorList>
    </citation>
    <scope>NUCLEOTIDE SEQUENCE [GENOMIC DNA]</scope>
    <source>
        <strain>168 / JH642</strain>
    </source>
</reference>
<reference key="2">
    <citation type="journal article" date="1997" name="Nature">
        <title>The complete genome sequence of the Gram-positive bacterium Bacillus subtilis.</title>
        <authorList>
            <person name="Kunst F."/>
            <person name="Ogasawara N."/>
            <person name="Moszer I."/>
            <person name="Albertini A.M."/>
            <person name="Alloni G."/>
            <person name="Azevedo V."/>
            <person name="Bertero M.G."/>
            <person name="Bessieres P."/>
            <person name="Bolotin A."/>
            <person name="Borchert S."/>
            <person name="Borriss R."/>
            <person name="Boursier L."/>
            <person name="Brans A."/>
            <person name="Braun M."/>
            <person name="Brignell S.C."/>
            <person name="Bron S."/>
            <person name="Brouillet S."/>
            <person name="Bruschi C.V."/>
            <person name="Caldwell B."/>
            <person name="Capuano V."/>
            <person name="Carter N.M."/>
            <person name="Choi S.-K."/>
            <person name="Codani J.-J."/>
            <person name="Connerton I.F."/>
            <person name="Cummings N.J."/>
            <person name="Daniel R.A."/>
            <person name="Denizot F."/>
            <person name="Devine K.M."/>
            <person name="Duesterhoeft A."/>
            <person name="Ehrlich S.D."/>
            <person name="Emmerson P.T."/>
            <person name="Entian K.-D."/>
            <person name="Errington J."/>
            <person name="Fabret C."/>
            <person name="Ferrari E."/>
            <person name="Foulger D."/>
            <person name="Fritz C."/>
            <person name="Fujita M."/>
            <person name="Fujita Y."/>
            <person name="Fuma S."/>
            <person name="Galizzi A."/>
            <person name="Galleron N."/>
            <person name="Ghim S.-Y."/>
            <person name="Glaser P."/>
            <person name="Goffeau A."/>
            <person name="Golightly E.J."/>
            <person name="Grandi G."/>
            <person name="Guiseppi G."/>
            <person name="Guy B.J."/>
            <person name="Haga K."/>
            <person name="Haiech J."/>
            <person name="Harwood C.R."/>
            <person name="Henaut A."/>
            <person name="Hilbert H."/>
            <person name="Holsappel S."/>
            <person name="Hosono S."/>
            <person name="Hullo M.-F."/>
            <person name="Itaya M."/>
            <person name="Jones L.-M."/>
            <person name="Joris B."/>
            <person name="Karamata D."/>
            <person name="Kasahara Y."/>
            <person name="Klaerr-Blanchard M."/>
            <person name="Klein C."/>
            <person name="Kobayashi Y."/>
            <person name="Koetter P."/>
            <person name="Koningstein G."/>
            <person name="Krogh S."/>
            <person name="Kumano M."/>
            <person name="Kurita K."/>
            <person name="Lapidus A."/>
            <person name="Lardinois S."/>
            <person name="Lauber J."/>
            <person name="Lazarevic V."/>
            <person name="Lee S.-M."/>
            <person name="Levine A."/>
            <person name="Liu H."/>
            <person name="Masuda S."/>
            <person name="Mauel C."/>
            <person name="Medigue C."/>
            <person name="Medina N."/>
            <person name="Mellado R.P."/>
            <person name="Mizuno M."/>
            <person name="Moestl D."/>
            <person name="Nakai S."/>
            <person name="Noback M."/>
            <person name="Noone D."/>
            <person name="O'Reilly M."/>
            <person name="Ogawa K."/>
            <person name="Ogiwara A."/>
            <person name="Oudega B."/>
            <person name="Park S.-H."/>
            <person name="Parro V."/>
            <person name="Pohl T.M."/>
            <person name="Portetelle D."/>
            <person name="Porwollik S."/>
            <person name="Prescott A.M."/>
            <person name="Presecan E."/>
            <person name="Pujic P."/>
            <person name="Purnelle B."/>
            <person name="Rapoport G."/>
            <person name="Rey M."/>
            <person name="Reynolds S."/>
            <person name="Rieger M."/>
            <person name="Rivolta C."/>
            <person name="Rocha E."/>
            <person name="Roche B."/>
            <person name="Rose M."/>
            <person name="Sadaie Y."/>
            <person name="Sato T."/>
            <person name="Scanlan E."/>
            <person name="Schleich S."/>
            <person name="Schroeter R."/>
            <person name="Scoffone F."/>
            <person name="Sekiguchi J."/>
            <person name="Sekowska A."/>
            <person name="Seror S.J."/>
            <person name="Serror P."/>
            <person name="Shin B.-S."/>
            <person name="Soldo B."/>
            <person name="Sorokin A."/>
            <person name="Tacconi E."/>
            <person name="Takagi T."/>
            <person name="Takahashi H."/>
            <person name="Takemaru K."/>
            <person name="Takeuchi M."/>
            <person name="Tamakoshi A."/>
            <person name="Tanaka T."/>
            <person name="Terpstra P."/>
            <person name="Tognoni A."/>
            <person name="Tosato V."/>
            <person name="Uchiyama S."/>
            <person name="Vandenbol M."/>
            <person name="Vannier F."/>
            <person name="Vassarotti A."/>
            <person name="Viari A."/>
            <person name="Wambutt R."/>
            <person name="Wedler E."/>
            <person name="Wedler H."/>
            <person name="Weitzenegger T."/>
            <person name="Winters P."/>
            <person name="Wipat A."/>
            <person name="Yamamoto H."/>
            <person name="Yamane K."/>
            <person name="Yasumoto K."/>
            <person name="Yata K."/>
            <person name="Yoshida K."/>
            <person name="Yoshikawa H.-F."/>
            <person name="Zumstein E."/>
            <person name="Yoshikawa H."/>
            <person name="Danchin A."/>
        </authorList>
    </citation>
    <scope>NUCLEOTIDE SEQUENCE [LARGE SCALE GENOMIC DNA]</scope>
    <source>
        <strain>168</strain>
    </source>
</reference>
<reference key="3">
    <citation type="journal article" date="1999" name="J. Biol. Chem.">
        <title>Studies on the ADP-ribose pyrophosphatase subfamily of the nudix hydrolases and tentative identification of trgB, a gene associated with tellurite resistance.</title>
        <authorList>
            <person name="Dunn C.A."/>
            <person name="O'Handley S.F."/>
            <person name="Frick D.N."/>
            <person name="Bessman M.J."/>
        </authorList>
    </citation>
    <scope>CHARACTERIZATION</scope>
</reference>
<organism>
    <name type="scientific">Bacillus subtilis (strain 168)</name>
    <dbReference type="NCBI Taxonomy" id="224308"/>
    <lineage>
        <taxon>Bacteria</taxon>
        <taxon>Bacillati</taxon>
        <taxon>Bacillota</taxon>
        <taxon>Bacilli</taxon>
        <taxon>Bacillales</taxon>
        <taxon>Bacillaceae</taxon>
        <taxon>Bacillus</taxon>
    </lineage>
</organism>
<comment type="function">
    <text evidence="1">Acts on ADP-mannose and ADP-glucose as well as ADP-ribose. Prevents glycogen biosynthesis. The reaction catalyzed by this enzyme is a limiting step of the gluconeogenic process (By similarity).</text>
</comment>
<comment type="catalytic activity">
    <reaction>
        <text>ADP-D-ribose + H2O = D-ribose 5-phosphate + AMP + 2 H(+)</text>
        <dbReference type="Rhea" id="RHEA:10412"/>
        <dbReference type="ChEBI" id="CHEBI:15377"/>
        <dbReference type="ChEBI" id="CHEBI:15378"/>
        <dbReference type="ChEBI" id="CHEBI:57967"/>
        <dbReference type="ChEBI" id="CHEBI:78346"/>
        <dbReference type="ChEBI" id="CHEBI:456215"/>
        <dbReference type="EC" id="3.6.1.13"/>
    </reaction>
</comment>
<comment type="cofactor">
    <cofactor evidence="1">
        <name>Mg(2+)</name>
        <dbReference type="ChEBI" id="CHEBI:18420"/>
    </cofactor>
    <text evidence="1">Binds 3 Mg(2+) ions per subunit.</text>
</comment>
<comment type="similarity">
    <text evidence="3">Belongs to the Nudix hydrolase family. NudF subfamily.</text>
</comment>
<feature type="chain" id="PRO_0000057041" description="ADP-ribose pyrophosphatase">
    <location>
        <begin position="1"/>
        <end position="185"/>
    </location>
</feature>
<feature type="domain" description="Nudix hydrolase" evidence="2">
    <location>
        <begin position="40"/>
        <end position="171"/>
    </location>
</feature>
<feature type="short sequence motif" description="Nudix box">
    <location>
        <begin position="77"/>
        <end position="98"/>
    </location>
</feature>
<feature type="active site" description="Proton acceptor" evidence="1">
    <location>
        <position position="140"/>
    </location>
</feature>
<feature type="binding site" description="in other chain" evidence="1">
    <location>
        <begin position="14"/>
        <end position="15"/>
    </location>
    <ligand>
        <name>substrate</name>
        <note>ligand shared between dimeric partners</note>
    </ligand>
</feature>
<feature type="binding site" evidence="1">
    <location>
        <begin position="37"/>
        <end position="38"/>
    </location>
    <ligand>
        <name>substrate</name>
        <note>ligand shared between dimeric partners</note>
    </ligand>
</feature>
<feature type="binding site" description="in other chain" evidence="1">
    <location>
        <position position="64"/>
    </location>
    <ligand>
        <name>substrate</name>
        <note>ligand shared between dimeric partners</note>
    </ligand>
</feature>
<feature type="binding site" evidence="1">
    <location>
        <position position="76"/>
    </location>
    <ligand>
        <name>Mg(2+)</name>
        <dbReference type="ChEBI" id="CHEBI:18420"/>
        <label>1</label>
    </ligand>
</feature>
<feature type="binding site" evidence="1">
    <location>
        <position position="92"/>
    </location>
    <ligand>
        <name>Mg(2+)</name>
        <dbReference type="ChEBI" id="CHEBI:18420"/>
        <label>2</label>
    </ligand>
</feature>
<feature type="binding site" evidence="1">
    <location>
        <position position="92"/>
    </location>
    <ligand>
        <name>Mg(2+)</name>
        <dbReference type="ChEBI" id="CHEBI:18420"/>
        <label>3</label>
    </ligand>
</feature>
<feature type="binding site" evidence="1">
    <location>
        <position position="96"/>
    </location>
    <ligand>
        <name>Mg(2+)</name>
        <dbReference type="ChEBI" id="CHEBI:18420"/>
        <label>1</label>
    </ligand>
</feature>
<feature type="binding site" evidence="1">
    <location>
        <position position="96"/>
    </location>
    <ligand>
        <name>Mg(2+)</name>
        <dbReference type="ChEBI" id="CHEBI:18420"/>
        <label>3</label>
    </ligand>
</feature>
<feature type="binding site" evidence="1">
    <location>
        <begin position="113"/>
        <end position="115"/>
    </location>
    <ligand>
        <name>substrate</name>
        <note>ligand shared between dimeric partners</note>
    </ligand>
</feature>
<feature type="binding site" description="in other chain" evidence="1">
    <location>
        <position position="119"/>
    </location>
    <ligand>
        <name>substrate</name>
        <note>ligand shared between dimeric partners</note>
    </ligand>
</feature>
<feature type="binding site" evidence="1">
    <location>
        <position position="142"/>
    </location>
    <ligand>
        <name>Mg(2+)</name>
        <dbReference type="ChEBI" id="CHEBI:18420"/>
        <label>3</label>
    </ligand>
</feature>
<proteinExistence type="evidence at protein level"/>
<accession>P54570</accession>
<evidence type="ECO:0000250" key="1"/>
<evidence type="ECO:0000255" key="2">
    <source>
        <dbReference type="PROSITE-ProRule" id="PRU00794"/>
    </source>
</evidence>
<evidence type="ECO:0000305" key="3"/>
<dbReference type="EC" id="3.6.1.13"/>
<dbReference type="EMBL" id="D84432">
    <property type="protein sequence ID" value="BAA12639.1"/>
    <property type="molecule type" value="Genomic_DNA"/>
</dbReference>
<dbReference type="EMBL" id="AL009126">
    <property type="protein sequence ID" value="CAB14293.1"/>
    <property type="molecule type" value="Genomic_DNA"/>
</dbReference>
<dbReference type="PIR" id="A69967">
    <property type="entry name" value="A69967"/>
</dbReference>
<dbReference type="RefSeq" id="NP_390242.1">
    <property type="nucleotide sequence ID" value="NC_000964.3"/>
</dbReference>
<dbReference type="RefSeq" id="WP_004398600.1">
    <property type="nucleotide sequence ID" value="NZ_OZ025638.1"/>
</dbReference>
<dbReference type="SMR" id="P54570"/>
<dbReference type="FunCoup" id="P54570">
    <property type="interactions" value="536"/>
</dbReference>
<dbReference type="STRING" id="224308.BSU23610"/>
<dbReference type="PaxDb" id="224308-BSU23610"/>
<dbReference type="EnsemblBacteria" id="CAB14293">
    <property type="protein sequence ID" value="CAB14293"/>
    <property type="gene ID" value="BSU_23610"/>
</dbReference>
<dbReference type="GeneID" id="938719"/>
<dbReference type="KEGG" id="bsu:BSU23610"/>
<dbReference type="PATRIC" id="fig|224308.179.peg.2573"/>
<dbReference type="eggNOG" id="COG0494">
    <property type="taxonomic scope" value="Bacteria"/>
</dbReference>
<dbReference type="InParanoid" id="P54570"/>
<dbReference type="OrthoDB" id="9806150at2"/>
<dbReference type="PhylomeDB" id="P54570"/>
<dbReference type="BioCyc" id="BSUB:BSU23610-MONOMER"/>
<dbReference type="BRENDA" id="3.6.1.13">
    <property type="organism ID" value="658"/>
</dbReference>
<dbReference type="Proteomes" id="UP000001570">
    <property type="component" value="Chromosome"/>
</dbReference>
<dbReference type="GO" id="GO:0005829">
    <property type="term" value="C:cytosol"/>
    <property type="evidence" value="ECO:0000318"/>
    <property type="project" value="GO_Central"/>
</dbReference>
<dbReference type="GO" id="GO:0047631">
    <property type="term" value="F:ADP-ribose diphosphatase activity"/>
    <property type="evidence" value="ECO:0007669"/>
    <property type="project" value="UniProtKB-EC"/>
</dbReference>
<dbReference type="GO" id="GO:0046872">
    <property type="term" value="F:metal ion binding"/>
    <property type="evidence" value="ECO:0007669"/>
    <property type="project" value="UniProtKB-KW"/>
</dbReference>
<dbReference type="GO" id="GO:0006753">
    <property type="term" value="P:nucleoside phosphate metabolic process"/>
    <property type="evidence" value="ECO:0000318"/>
    <property type="project" value="GO_Central"/>
</dbReference>
<dbReference type="GO" id="GO:0019693">
    <property type="term" value="P:ribose phosphate metabolic process"/>
    <property type="evidence" value="ECO:0000318"/>
    <property type="project" value="GO_Central"/>
</dbReference>
<dbReference type="CDD" id="cd03424">
    <property type="entry name" value="NUDIX_ADPRase_Nudt5_UGPPase_Nudt14"/>
    <property type="match status" value="1"/>
</dbReference>
<dbReference type="FunFam" id="3.90.79.10:FF:000024">
    <property type="entry name" value="ADP-ribose pyrophosphatase"/>
    <property type="match status" value="1"/>
</dbReference>
<dbReference type="Gene3D" id="3.90.79.10">
    <property type="entry name" value="Nucleoside Triphosphate Pyrophosphohydrolase"/>
    <property type="match status" value="1"/>
</dbReference>
<dbReference type="InterPro" id="IPR020476">
    <property type="entry name" value="Nudix_hydrolase"/>
</dbReference>
<dbReference type="InterPro" id="IPR015797">
    <property type="entry name" value="NUDIX_hydrolase-like_dom_sf"/>
</dbReference>
<dbReference type="InterPro" id="IPR020084">
    <property type="entry name" value="NUDIX_hydrolase_CS"/>
</dbReference>
<dbReference type="InterPro" id="IPR000086">
    <property type="entry name" value="NUDIX_hydrolase_dom"/>
</dbReference>
<dbReference type="PANTHER" id="PTHR11839:SF18">
    <property type="entry name" value="NUDIX HYDROLASE DOMAIN-CONTAINING PROTEIN"/>
    <property type="match status" value="1"/>
</dbReference>
<dbReference type="PANTHER" id="PTHR11839">
    <property type="entry name" value="UDP/ADP-SUGAR PYROPHOSPHATASE"/>
    <property type="match status" value="1"/>
</dbReference>
<dbReference type="Pfam" id="PF00293">
    <property type="entry name" value="NUDIX"/>
    <property type="match status" value="1"/>
</dbReference>
<dbReference type="PRINTS" id="PR00502">
    <property type="entry name" value="NUDIXFAMILY"/>
</dbReference>
<dbReference type="SUPFAM" id="SSF55811">
    <property type="entry name" value="Nudix"/>
    <property type="match status" value="1"/>
</dbReference>
<dbReference type="PROSITE" id="PS51462">
    <property type="entry name" value="NUDIX"/>
    <property type="match status" value="1"/>
</dbReference>
<dbReference type="PROSITE" id="PS00893">
    <property type="entry name" value="NUDIX_BOX"/>
    <property type="match status" value="1"/>
</dbReference>
<protein>
    <recommendedName>
        <fullName>ADP-ribose pyrophosphatase</fullName>
        <ecNumber>3.6.1.13</ecNumber>
    </recommendedName>
    <alternativeName>
        <fullName>ADP-ribose diphosphatase</fullName>
    </alternativeName>
    <alternativeName>
        <fullName>ADP-ribose phosphohydrolase</fullName>
        <shortName>ASPPase</shortName>
    </alternativeName>
    <alternativeName>
        <fullName>Adenosine diphosphoribose pyrophosphatase</fullName>
        <shortName>ADPR-PPase</shortName>
    </alternativeName>
</protein>
<gene>
    <name type="primary">nudF</name>
    <name type="synonym">yqkG</name>
    <name type="ordered locus">BSU23610</name>
</gene>
<keyword id="KW-0378">Hydrolase</keyword>
<keyword id="KW-0460">Magnesium</keyword>
<keyword id="KW-0479">Metal-binding</keyword>
<keyword id="KW-1185">Reference proteome</keyword>
<name>ADPP_BACSU</name>